<gene>
    <name type="primary">MCSU3</name>
    <name type="ordered locus">Os06g0670000</name>
    <name type="ordered locus">LOC_Os06g45860</name>
    <name evidence="4" type="ORF">OsJ_22313</name>
    <name type="ORF">P0686E06.35</name>
</gene>
<proteinExistence type="evidence at transcript level"/>
<feature type="chain" id="PRO_0000249960" description="Molybdenum cofactor sulfurase">
    <location>
        <begin position="1"/>
        <end position="824"/>
    </location>
</feature>
<feature type="domain" description="MOSC" evidence="2">
    <location>
        <begin position="655"/>
        <end position="822"/>
    </location>
</feature>
<feature type="active site" evidence="2">
    <location>
        <position position="433"/>
    </location>
</feature>
<feature type="modified residue" description="N6-(pyridoxal phosphate)lysine" evidence="2">
    <location>
        <position position="274"/>
    </location>
</feature>
<feature type="sequence conflict" description="In Ref. 1; ABH88164." evidence="3" ref="1">
    <original>R</original>
    <variation>K</variation>
    <location>
        <position position="183"/>
    </location>
</feature>
<feature type="sequence conflict" description="In Ref. 1; ABH88164." evidence="3" ref="1">
    <original>A</original>
    <variation>V</variation>
    <location>
        <position position="473"/>
    </location>
</feature>
<feature type="sequence conflict" description="In Ref. 1; ABH88164." evidence="3" ref="1">
    <original>R</original>
    <variation>H</variation>
    <location>
        <position position="722"/>
    </location>
</feature>
<feature type="sequence conflict" description="In Ref. 1; ABH88164." evidence="3" ref="1">
    <original>DI</original>
    <variation>GT</variation>
    <location>
        <begin position="799"/>
        <end position="800"/>
    </location>
</feature>
<name>MOCOS_ORYSJ</name>
<keyword id="KW-0501">Molybdenum cofactor biosynthesis</keyword>
<keyword id="KW-0663">Pyridoxal phosphate</keyword>
<keyword id="KW-1185">Reference proteome</keyword>
<keyword id="KW-0808">Transferase</keyword>
<organism>
    <name type="scientific">Oryza sativa subsp. japonica</name>
    <name type="common">Rice</name>
    <dbReference type="NCBI Taxonomy" id="39947"/>
    <lineage>
        <taxon>Eukaryota</taxon>
        <taxon>Viridiplantae</taxon>
        <taxon>Streptophyta</taxon>
        <taxon>Embryophyta</taxon>
        <taxon>Tracheophyta</taxon>
        <taxon>Spermatophyta</taxon>
        <taxon>Magnoliopsida</taxon>
        <taxon>Liliopsida</taxon>
        <taxon>Poales</taxon>
        <taxon>Poaceae</taxon>
        <taxon>BOP clade</taxon>
        <taxon>Oryzoideae</taxon>
        <taxon>Oryzeae</taxon>
        <taxon>Oryzinae</taxon>
        <taxon>Oryza</taxon>
        <taxon>Oryza sativa</taxon>
    </lineage>
</organism>
<accession>Q655R6</accession>
<accession>B9FQF2</accession>
<accession>Q0DA83</accession>
<accession>Q0MRQ5</accession>
<evidence type="ECO:0000250" key="1">
    <source>
        <dbReference type="UniProtKB" id="Q96EN8"/>
    </source>
</evidence>
<evidence type="ECO:0000255" key="2">
    <source>
        <dbReference type="HAMAP-Rule" id="MF_03050"/>
    </source>
</evidence>
<evidence type="ECO:0000305" key="3"/>
<evidence type="ECO:0000312" key="4">
    <source>
        <dbReference type="EMBL" id="EEE66194.1"/>
    </source>
</evidence>
<dbReference type="EC" id="2.8.1.9" evidence="2"/>
<dbReference type="EMBL" id="DQ855409">
    <property type="protein sequence ID" value="ABH88164.1"/>
    <property type="molecule type" value="mRNA"/>
</dbReference>
<dbReference type="EMBL" id="AP003635">
    <property type="protein sequence ID" value="BAD45451.1"/>
    <property type="status" value="ALT_SEQ"/>
    <property type="molecule type" value="Genomic_DNA"/>
</dbReference>
<dbReference type="EMBL" id="AP008212">
    <property type="protein sequence ID" value="BAF20240.2"/>
    <property type="status" value="ALT_SEQ"/>
    <property type="molecule type" value="Genomic_DNA"/>
</dbReference>
<dbReference type="EMBL" id="AP014962">
    <property type="protein sequence ID" value="BAS99067.1"/>
    <property type="molecule type" value="Genomic_DNA"/>
</dbReference>
<dbReference type="EMBL" id="CM000143">
    <property type="protein sequence ID" value="EEE66194.1"/>
    <property type="molecule type" value="Genomic_DNA"/>
</dbReference>
<dbReference type="RefSeq" id="XP_015644048.1">
    <property type="nucleotide sequence ID" value="XM_015788562.1"/>
</dbReference>
<dbReference type="SMR" id="Q655R6"/>
<dbReference type="FunCoup" id="Q655R6">
    <property type="interactions" value="1755"/>
</dbReference>
<dbReference type="STRING" id="39947.Q655R6"/>
<dbReference type="PaxDb" id="39947-Q655R6"/>
<dbReference type="EnsemblPlants" id="Os06t0670000-01">
    <property type="protein sequence ID" value="Os06t0670000-01"/>
    <property type="gene ID" value="Os06g0670000"/>
</dbReference>
<dbReference type="Gramene" id="Os06t0670000-01">
    <property type="protein sequence ID" value="Os06t0670000-01"/>
    <property type="gene ID" value="Os06g0670000"/>
</dbReference>
<dbReference type="KEGG" id="dosa:Os06g0670000"/>
<dbReference type="eggNOG" id="KOG2142">
    <property type="taxonomic scope" value="Eukaryota"/>
</dbReference>
<dbReference type="HOGENOM" id="CLU_010913_0_1_1"/>
<dbReference type="InParanoid" id="Q655R6"/>
<dbReference type="OMA" id="PCTRCQM"/>
<dbReference type="OrthoDB" id="10264306at2759"/>
<dbReference type="UniPathway" id="UPA00344"/>
<dbReference type="Proteomes" id="UP000000763">
    <property type="component" value="Chromosome 6"/>
</dbReference>
<dbReference type="Proteomes" id="UP000007752">
    <property type="component" value="Chromosome 6"/>
</dbReference>
<dbReference type="Proteomes" id="UP000059680">
    <property type="component" value="Chromosome 6"/>
</dbReference>
<dbReference type="GO" id="GO:0016829">
    <property type="term" value="F:lyase activity"/>
    <property type="evidence" value="ECO:0007669"/>
    <property type="project" value="UniProtKB-UniRule"/>
</dbReference>
<dbReference type="GO" id="GO:0008265">
    <property type="term" value="F:molybdenum cofactor sulfurtransferase activity"/>
    <property type="evidence" value="ECO:0007669"/>
    <property type="project" value="UniProtKB-UniRule"/>
</dbReference>
<dbReference type="GO" id="GO:0030151">
    <property type="term" value="F:molybdenum ion binding"/>
    <property type="evidence" value="ECO:0007669"/>
    <property type="project" value="UniProtKB-UniRule"/>
</dbReference>
<dbReference type="GO" id="GO:0030170">
    <property type="term" value="F:pyridoxal phosphate binding"/>
    <property type="evidence" value="ECO:0007669"/>
    <property type="project" value="UniProtKB-UniRule"/>
</dbReference>
<dbReference type="GO" id="GO:0006777">
    <property type="term" value="P:Mo-molybdopterin cofactor biosynthetic process"/>
    <property type="evidence" value="ECO:0007669"/>
    <property type="project" value="UniProtKB-UniRule"/>
</dbReference>
<dbReference type="GO" id="GO:0032787">
    <property type="term" value="P:monocarboxylic acid metabolic process"/>
    <property type="evidence" value="ECO:0007669"/>
    <property type="project" value="UniProtKB-ARBA"/>
</dbReference>
<dbReference type="Gene3D" id="3.90.1150.10">
    <property type="entry name" value="Aspartate Aminotransferase, domain 1"/>
    <property type="match status" value="1"/>
</dbReference>
<dbReference type="Gene3D" id="3.40.640.10">
    <property type="entry name" value="Type I PLP-dependent aspartate aminotransferase-like (Major domain)"/>
    <property type="match status" value="1"/>
</dbReference>
<dbReference type="HAMAP" id="MF_03050">
    <property type="entry name" value="MOCOS"/>
    <property type="match status" value="1"/>
</dbReference>
<dbReference type="InterPro" id="IPR000192">
    <property type="entry name" value="Aminotrans_V_dom"/>
</dbReference>
<dbReference type="InterPro" id="IPR005302">
    <property type="entry name" value="MoCF_Sase_C"/>
</dbReference>
<dbReference type="InterPro" id="IPR028886">
    <property type="entry name" value="MoCo_sulfurase"/>
</dbReference>
<dbReference type="InterPro" id="IPR005303">
    <property type="entry name" value="MOCOS_middle"/>
</dbReference>
<dbReference type="InterPro" id="IPR015424">
    <property type="entry name" value="PyrdxlP-dep_Trfase"/>
</dbReference>
<dbReference type="InterPro" id="IPR015421">
    <property type="entry name" value="PyrdxlP-dep_Trfase_major"/>
</dbReference>
<dbReference type="InterPro" id="IPR015422">
    <property type="entry name" value="PyrdxlP-dep_Trfase_small"/>
</dbReference>
<dbReference type="InterPro" id="IPR011037">
    <property type="entry name" value="Pyrv_Knase-like_insert_dom_sf"/>
</dbReference>
<dbReference type="PANTHER" id="PTHR14237:SF89">
    <property type="entry name" value="MOLYBDENUM COFACTOR SULFURASE"/>
    <property type="match status" value="1"/>
</dbReference>
<dbReference type="PANTHER" id="PTHR14237">
    <property type="entry name" value="MOLYBDOPTERIN COFACTOR SULFURASE MOSC"/>
    <property type="match status" value="1"/>
</dbReference>
<dbReference type="Pfam" id="PF00266">
    <property type="entry name" value="Aminotran_5"/>
    <property type="match status" value="2"/>
</dbReference>
<dbReference type="Pfam" id="PF03473">
    <property type="entry name" value="MOSC"/>
    <property type="match status" value="1"/>
</dbReference>
<dbReference type="Pfam" id="PF03476">
    <property type="entry name" value="MOSC_N"/>
    <property type="match status" value="1"/>
</dbReference>
<dbReference type="SUPFAM" id="SSF141673">
    <property type="entry name" value="MOSC N-terminal domain-like"/>
    <property type="match status" value="1"/>
</dbReference>
<dbReference type="SUPFAM" id="SSF50800">
    <property type="entry name" value="PK beta-barrel domain-like"/>
    <property type="match status" value="1"/>
</dbReference>
<dbReference type="SUPFAM" id="SSF53383">
    <property type="entry name" value="PLP-dependent transferases"/>
    <property type="match status" value="1"/>
</dbReference>
<dbReference type="PROSITE" id="PS51340">
    <property type="entry name" value="MOSC"/>
    <property type="match status" value="1"/>
</dbReference>
<protein>
    <recommendedName>
        <fullName evidence="2">Molybdenum cofactor sulfurase</fullName>
        <shortName evidence="2">MCS</shortName>
        <shortName evidence="2">MOS</shortName>
        <shortName evidence="2">MoCo sulfurase</shortName>
        <ecNumber evidence="2">2.8.1.9</ecNumber>
    </recommendedName>
    <alternativeName>
        <fullName evidence="2">Molybdenum cofactor sulfurase-like protein 3</fullName>
    </alternativeName>
    <alternativeName>
        <fullName evidence="2">Molybdenum cofactor sulfurtransferase</fullName>
    </alternativeName>
</protein>
<reference key="1">
    <citation type="submission" date="2006-07" db="EMBL/GenBank/DDBJ databases">
        <title>Characterization of the rice molybdenum cofactor sulfurase family genes.</title>
        <authorList>
            <person name="Wang S.-J."/>
            <person name="Huang P.-M."/>
        </authorList>
    </citation>
    <scope>NUCLEOTIDE SEQUENCE [MRNA]</scope>
</reference>
<reference key="2">
    <citation type="journal article" date="2005" name="Nature">
        <title>The map-based sequence of the rice genome.</title>
        <authorList>
            <consortium name="International rice genome sequencing project (IRGSP)"/>
        </authorList>
    </citation>
    <scope>NUCLEOTIDE SEQUENCE [LARGE SCALE GENOMIC DNA]</scope>
    <source>
        <strain>cv. Nipponbare</strain>
    </source>
</reference>
<reference key="3">
    <citation type="journal article" date="2008" name="Nucleic Acids Res.">
        <title>The rice annotation project database (RAP-DB): 2008 update.</title>
        <authorList>
            <consortium name="The rice annotation project (RAP)"/>
        </authorList>
    </citation>
    <scope>GENOME REANNOTATION</scope>
    <source>
        <strain>cv. Nipponbare</strain>
    </source>
</reference>
<reference key="4">
    <citation type="journal article" date="2013" name="Rice">
        <title>Improvement of the Oryza sativa Nipponbare reference genome using next generation sequence and optical map data.</title>
        <authorList>
            <person name="Kawahara Y."/>
            <person name="de la Bastide M."/>
            <person name="Hamilton J.P."/>
            <person name="Kanamori H."/>
            <person name="McCombie W.R."/>
            <person name="Ouyang S."/>
            <person name="Schwartz D.C."/>
            <person name="Tanaka T."/>
            <person name="Wu J."/>
            <person name="Zhou S."/>
            <person name="Childs K.L."/>
            <person name="Davidson R.M."/>
            <person name="Lin H."/>
            <person name="Quesada-Ocampo L."/>
            <person name="Vaillancourt B."/>
            <person name="Sakai H."/>
            <person name="Lee S.S."/>
            <person name="Kim J."/>
            <person name="Numa H."/>
            <person name="Itoh T."/>
            <person name="Buell C.R."/>
            <person name="Matsumoto T."/>
        </authorList>
    </citation>
    <scope>GENOME REANNOTATION</scope>
    <source>
        <strain>cv. Nipponbare</strain>
    </source>
</reference>
<reference key="5">
    <citation type="journal article" date="2005" name="PLoS Biol.">
        <title>The genomes of Oryza sativa: a history of duplications.</title>
        <authorList>
            <person name="Yu J."/>
            <person name="Wang J."/>
            <person name="Lin W."/>
            <person name="Li S."/>
            <person name="Li H."/>
            <person name="Zhou J."/>
            <person name="Ni P."/>
            <person name="Dong W."/>
            <person name="Hu S."/>
            <person name="Zeng C."/>
            <person name="Zhang J."/>
            <person name="Zhang Y."/>
            <person name="Li R."/>
            <person name="Xu Z."/>
            <person name="Li S."/>
            <person name="Li X."/>
            <person name="Zheng H."/>
            <person name="Cong L."/>
            <person name="Lin L."/>
            <person name="Yin J."/>
            <person name="Geng J."/>
            <person name="Li G."/>
            <person name="Shi J."/>
            <person name="Liu J."/>
            <person name="Lv H."/>
            <person name="Li J."/>
            <person name="Wang J."/>
            <person name="Deng Y."/>
            <person name="Ran L."/>
            <person name="Shi X."/>
            <person name="Wang X."/>
            <person name="Wu Q."/>
            <person name="Li C."/>
            <person name="Ren X."/>
            <person name="Wang J."/>
            <person name="Wang X."/>
            <person name="Li D."/>
            <person name="Liu D."/>
            <person name="Zhang X."/>
            <person name="Ji Z."/>
            <person name="Zhao W."/>
            <person name="Sun Y."/>
            <person name="Zhang Z."/>
            <person name="Bao J."/>
            <person name="Han Y."/>
            <person name="Dong L."/>
            <person name="Ji J."/>
            <person name="Chen P."/>
            <person name="Wu S."/>
            <person name="Liu J."/>
            <person name="Xiao Y."/>
            <person name="Bu D."/>
            <person name="Tan J."/>
            <person name="Yang L."/>
            <person name="Ye C."/>
            <person name="Zhang J."/>
            <person name="Xu J."/>
            <person name="Zhou Y."/>
            <person name="Yu Y."/>
            <person name="Zhang B."/>
            <person name="Zhuang S."/>
            <person name="Wei H."/>
            <person name="Liu B."/>
            <person name="Lei M."/>
            <person name="Yu H."/>
            <person name="Li Y."/>
            <person name="Xu H."/>
            <person name="Wei S."/>
            <person name="He X."/>
            <person name="Fang L."/>
            <person name="Zhang Z."/>
            <person name="Zhang Y."/>
            <person name="Huang X."/>
            <person name="Su Z."/>
            <person name="Tong W."/>
            <person name="Li J."/>
            <person name="Tong Z."/>
            <person name="Li S."/>
            <person name="Ye J."/>
            <person name="Wang L."/>
            <person name="Fang L."/>
            <person name="Lei T."/>
            <person name="Chen C.-S."/>
            <person name="Chen H.-C."/>
            <person name="Xu Z."/>
            <person name="Li H."/>
            <person name="Huang H."/>
            <person name="Zhang F."/>
            <person name="Xu H."/>
            <person name="Li N."/>
            <person name="Zhao C."/>
            <person name="Li S."/>
            <person name="Dong L."/>
            <person name="Huang Y."/>
            <person name="Li L."/>
            <person name="Xi Y."/>
            <person name="Qi Q."/>
            <person name="Li W."/>
            <person name="Zhang B."/>
            <person name="Hu W."/>
            <person name="Zhang Y."/>
            <person name="Tian X."/>
            <person name="Jiao Y."/>
            <person name="Liang X."/>
            <person name="Jin J."/>
            <person name="Gao L."/>
            <person name="Zheng W."/>
            <person name="Hao B."/>
            <person name="Liu S.-M."/>
            <person name="Wang W."/>
            <person name="Yuan L."/>
            <person name="Cao M."/>
            <person name="McDermott J."/>
            <person name="Samudrala R."/>
            <person name="Wang J."/>
            <person name="Wong G.K.-S."/>
            <person name="Yang H."/>
        </authorList>
    </citation>
    <scope>NUCLEOTIDE SEQUENCE [LARGE SCALE GENOMIC DNA]</scope>
    <source>
        <strain>cv. Nipponbare</strain>
    </source>
</reference>
<comment type="function">
    <text evidence="2">Sulfurates the molybdenum cofactor. Sulfation of molybdenum is essential for xanthine dehydrogenase (XDH) and aldehyde oxidase (ADO) enzymes in which molybdenum cofactor is liganded by 1 oxygen and 1 sulfur atom in active form.</text>
</comment>
<comment type="catalytic activity">
    <reaction evidence="2">
        <text>Mo-molybdopterin + L-cysteine + AH2 = thio-Mo-molybdopterin + L-alanine + A + H2O</text>
        <dbReference type="Rhea" id="RHEA:42636"/>
        <dbReference type="ChEBI" id="CHEBI:13193"/>
        <dbReference type="ChEBI" id="CHEBI:15377"/>
        <dbReference type="ChEBI" id="CHEBI:17499"/>
        <dbReference type="ChEBI" id="CHEBI:35235"/>
        <dbReference type="ChEBI" id="CHEBI:57972"/>
        <dbReference type="ChEBI" id="CHEBI:71302"/>
        <dbReference type="ChEBI" id="CHEBI:82685"/>
        <dbReference type="EC" id="2.8.1.9"/>
    </reaction>
</comment>
<comment type="cofactor">
    <cofactor evidence="2">
        <name>pyridoxal 5'-phosphate</name>
        <dbReference type="ChEBI" id="CHEBI:597326"/>
    </cofactor>
</comment>
<comment type="pathway">
    <text evidence="1">Cofactor biosynthesis; molybdopterin biosynthesis.</text>
</comment>
<comment type="similarity">
    <text evidence="2">Belongs to the class-V pyridoxal-phosphate-dependent aminotransferase family. MOCOS subfamily.</text>
</comment>
<comment type="sequence caution" evidence="3">
    <conflict type="erroneous gene model prediction">
        <sequence resource="EMBL-CDS" id="BAD45451"/>
    </conflict>
</comment>
<comment type="sequence caution" evidence="3">
    <conflict type="erroneous gene model prediction">
        <sequence resource="EMBL-CDS" id="BAF20240"/>
    </conflict>
</comment>
<sequence length="824" mass="91836">MEVSKEEFLRQFGGDYGYPGAPKGVDEMRAAEFKRLEGMAYLDHAGATLYSEAQMADVLKDLASNVYGNPHSQSDSSMAASDLVTAARHQVLKYFNASPREYKCIFTSGATAALKLVGECFPWSRESCYMYTMENHNSVLGIREYALSKGATVLAVDVEEGADLAKDNGSYSLYKISRRTNQRRSKDVLSHNCQNGSLSDISGNNWNIFAFPSECNFSGQKFSLSLVKLIKEGKIPLQQQGKWMVLIDAAKGCATEPPNLTVYPADFVVCSFYKIFGYPTGLGALIVKNEAANLLNKTYFSGGTVAASIADIDFVQKRKNIEQVLEDGTISFLNIASLRHGFKIIEMLTTSAIERHTTSLATYVRNKMLDLKHSNEINVCTIYGQQYSKVEGLKMGPTITFNLKREDGSWFGYREVEKLASLFGIHLRTGCFCNPGACAKYLGLSHSDLVSNFEAGHVCWDDNDIINGKPTGAVRISFGYMSTFEDAEKFLKFLQSSFVSLPVQFNNGYMLNLNSLNLIDNSSQKAVSDIHLKSIIIYPVKSCQGFSVKSWPLTTGGLMYDREWLLQGSGGEILTQKKVPELGSIRTLIDLELGKLFIESPTRRDKLQLSLLESLADLSEEVDVFGQRYEVQSYDDRVNTWFSEAIGRPCTLVRCSSSKYRSCTYTGLRDRPCRDTQSKLNFVNEGQLLLISEESISDLNSRLNSGKGDCKQKLPVDAMRFRPNLVISGSSPYSEDNWKKLRIGEACFTSMGGCNRCQMINLHQDSGQVLKSKEPLATLASYRRKKGKILFGILLNYEDIMEGENETIAGRWLQVGQQVYPSTE</sequence>